<evidence type="ECO:0000255" key="1"/>
<evidence type="ECO:0000256" key="2">
    <source>
        <dbReference type="SAM" id="MobiDB-lite"/>
    </source>
</evidence>
<evidence type="ECO:0000269" key="3">
    <source>
    </source>
</evidence>
<evidence type="ECO:0000305" key="4"/>
<evidence type="ECO:0000312" key="5">
    <source>
        <dbReference type="WormBase" id="M01G5.5"/>
    </source>
</evidence>
<dbReference type="EMBL" id="AY661556">
    <property type="protein sequence ID" value="AAV70493.1"/>
    <property type="molecule type" value="mRNA"/>
</dbReference>
<dbReference type="EMBL" id="BX284603">
    <property type="protein sequence ID" value="CCD73021.2"/>
    <property type="molecule type" value="Genomic_DNA"/>
</dbReference>
<dbReference type="PIR" id="F88392">
    <property type="entry name" value="F88392"/>
</dbReference>
<dbReference type="PIR" id="T33425">
    <property type="entry name" value="T33425"/>
</dbReference>
<dbReference type="RefSeq" id="NP_001367976.1">
    <property type="nucleotide sequence ID" value="NM_001381736.1"/>
</dbReference>
<dbReference type="RefSeq" id="NP_497416.4">
    <property type="nucleotide sequence ID" value="NM_065015.4"/>
</dbReference>
<dbReference type="SMR" id="O76689"/>
<dbReference type="BioGRID" id="56261">
    <property type="interactions" value="6"/>
</dbReference>
<dbReference type="FunCoup" id="O76689">
    <property type="interactions" value="7"/>
</dbReference>
<dbReference type="IntAct" id="O76689">
    <property type="interactions" value="1"/>
</dbReference>
<dbReference type="STRING" id="6239.M01G5.5.1"/>
<dbReference type="TCDB" id="2.A.22.2.7">
    <property type="family name" value="the neurotransmitter:sodium symporter (nss) family"/>
</dbReference>
<dbReference type="GlyCosmos" id="O76689">
    <property type="glycosylation" value="4 sites, No reported glycans"/>
</dbReference>
<dbReference type="iPTMnet" id="O76689"/>
<dbReference type="PaxDb" id="6239-M01G5.5"/>
<dbReference type="PeptideAtlas" id="O76689"/>
<dbReference type="EnsemblMetazoa" id="M01G5.5.1">
    <property type="protein sequence ID" value="M01G5.5.1"/>
    <property type="gene ID" value="WBGene00004905"/>
</dbReference>
<dbReference type="GeneID" id="191768"/>
<dbReference type="UCSC" id="M01G5.5">
    <property type="organism name" value="c. elegans"/>
</dbReference>
<dbReference type="AGR" id="WB:WBGene00004905"/>
<dbReference type="WormBase" id="M01G5.5">
    <property type="protein sequence ID" value="CE54177"/>
    <property type="gene ID" value="WBGene00004905"/>
    <property type="gene designation" value="snf-6"/>
</dbReference>
<dbReference type="eggNOG" id="KOG3660">
    <property type="taxonomic scope" value="Eukaryota"/>
</dbReference>
<dbReference type="GeneTree" id="ENSGT00940000154963"/>
<dbReference type="HOGENOM" id="CLU_006855_9_6_1"/>
<dbReference type="InParanoid" id="O76689"/>
<dbReference type="OrthoDB" id="6581954at2759"/>
<dbReference type="PhylomeDB" id="O76689"/>
<dbReference type="PRO" id="PR:O76689"/>
<dbReference type="Proteomes" id="UP000001940">
    <property type="component" value="Chromosome III"/>
</dbReference>
<dbReference type="Bgee" id="WBGene00004905">
    <property type="expression patterns" value="Expressed in embryo and 3 other cell types or tissues"/>
</dbReference>
<dbReference type="GO" id="GO:0005886">
    <property type="term" value="C:plasma membrane"/>
    <property type="evidence" value="ECO:0000318"/>
    <property type="project" value="GO_Central"/>
</dbReference>
<dbReference type="GO" id="GO:0045211">
    <property type="term" value="C:postsynaptic membrane"/>
    <property type="evidence" value="ECO:0000303"/>
    <property type="project" value="UniProtKB"/>
</dbReference>
<dbReference type="GO" id="GO:0005277">
    <property type="term" value="F:acetylcholine transmembrane transporter activity"/>
    <property type="evidence" value="ECO:0000314"/>
    <property type="project" value="UniProtKB"/>
</dbReference>
<dbReference type="GO" id="GO:0005283">
    <property type="term" value="F:amino acid:sodium symporter activity"/>
    <property type="evidence" value="ECO:0000318"/>
    <property type="project" value="GO_Central"/>
</dbReference>
<dbReference type="GO" id="GO:0015179">
    <property type="term" value="F:L-amino acid transmembrane transporter activity"/>
    <property type="evidence" value="ECO:0000318"/>
    <property type="project" value="GO_Central"/>
</dbReference>
<dbReference type="GO" id="GO:0005328">
    <property type="term" value="F:neurotransmitter:sodium symporter activity"/>
    <property type="evidence" value="ECO:0000303"/>
    <property type="project" value="UniProtKB"/>
</dbReference>
<dbReference type="GO" id="GO:0030165">
    <property type="term" value="F:PDZ domain binding"/>
    <property type="evidence" value="ECO:0000353"/>
    <property type="project" value="UniProtKB"/>
</dbReference>
<dbReference type="GO" id="GO:0015870">
    <property type="term" value="P:acetylcholine transport"/>
    <property type="evidence" value="ECO:0000314"/>
    <property type="project" value="UniProtKB"/>
</dbReference>
<dbReference type="GO" id="GO:0015871">
    <property type="term" value="P:choline transport"/>
    <property type="evidence" value="ECO:0000314"/>
    <property type="project" value="UniProtKB"/>
</dbReference>
<dbReference type="GO" id="GO:1903804">
    <property type="term" value="P:glycine import across plasma membrane"/>
    <property type="evidence" value="ECO:0000318"/>
    <property type="project" value="GO_Central"/>
</dbReference>
<dbReference type="GO" id="GO:0007274">
    <property type="term" value="P:neuromuscular synaptic transmission"/>
    <property type="evidence" value="ECO:0000303"/>
    <property type="project" value="UniProtKB"/>
</dbReference>
<dbReference type="GO" id="GO:0001504">
    <property type="term" value="P:neurotransmitter uptake"/>
    <property type="evidence" value="ECO:0000303"/>
    <property type="project" value="UniProtKB"/>
</dbReference>
<dbReference type="GO" id="GO:0040017">
    <property type="term" value="P:positive regulation of locomotion"/>
    <property type="evidence" value="ECO:0000315"/>
    <property type="project" value="UniProtKB"/>
</dbReference>
<dbReference type="GO" id="GO:0035725">
    <property type="term" value="P:sodium ion transmembrane transport"/>
    <property type="evidence" value="ECO:0000318"/>
    <property type="project" value="GO_Central"/>
</dbReference>
<dbReference type="InterPro" id="IPR000175">
    <property type="entry name" value="Na/ntran_symport"/>
</dbReference>
<dbReference type="InterPro" id="IPR037272">
    <property type="entry name" value="SNS_sf"/>
</dbReference>
<dbReference type="PANTHER" id="PTHR11616:SF321">
    <property type="entry name" value="SODIUM-DEPENDENT NUTRIENT AMINO ACID TRANSPORTER 1-RELATED"/>
    <property type="match status" value="1"/>
</dbReference>
<dbReference type="PANTHER" id="PTHR11616">
    <property type="entry name" value="SODIUM/CHLORIDE DEPENDENT TRANSPORTER"/>
    <property type="match status" value="1"/>
</dbReference>
<dbReference type="Pfam" id="PF00209">
    <property type="entry name" value="SNF"/>
    <property type="match status" value="1"/>
</dbReference>
<dbReference type="PRINTS" id="PR00176">
    <property type="entry name" value="NANEUSMPORT"/>
</dbReference>
<dbReference type="SUPFAM" id="SSF161070">
    <property type="entry name" value="SNF-like"/>
    <property type="match status" value="1"/>
</dbReference>
<dbReference type="PROSITE" id="PS00610">
    <property type="entry name" value="NA_NEUROTRAN_SYMP_1"/>
    <property type="match status" value="1"/>
</dbReference>
<dbReference type="PROSITE" id="PS00754">
    <property type="entry name" value="NA_NEUROTRAN_SYMP_2"/>
    <property type="match status" value="1"/>
</dbReference>
<dbReference type="PROSITE" id="PS50267">
    <property type="entry name" value="NA_NEUROTRAN_SYMP_3"/>
    <property type="match status" value="1"/>
</dbReference>
<name>SNF6_CAEEL</name>
<comment type="function">
    <text evidence="3">Mediates sodium-dependent uptake of acetylcholine at neuromuscular junctions during periods of increased synaptic activity, may also prevent spillover to adjacent synaptic sites. Not involved in the uptake of other neurotransmitters (GABA, glycine, proline and glutamate) and there was also no inhibition of uptake by adding an excess of other candidate substrates (GABA, glycine, taurine, creatine, proline, alanine, carnitine, glutamate and betaine). Required for muscle integrity; altered transport of acetylcholine due to loss of dystrophin-glycoprotein complex (DGC) function results in muscle degeneration.</text>
</comment>
<comment type="subunit">
    <text evidence="3">Interacts with stn-1; part of the DGC.</text>
</comment>
<comment type="interaction">
    <interactant intactId="EBI-447522">
        <id>O76689</id>
    </interactant>
    <interactant intactId="EBI-447079">
        <id>Q93646</id>
        <label>stn-1</label>
    </interactant>
    <organismsDiffer>false</organismsDiffer>
    <experiments>2</experiments>
</comment>
<comment type="subcellular location">
    <subcellularLocation>
        <location evidence="3">Cell membrane</location>
        <topology evidence="3">Multi-pass membrane protein</topology>
    </subcellularLocation>
    <subcellularLocation>
        <location evidence="4">Postsynaptic cell membrane</location>
        <topology evidence="4">Multi-pass membrane protein</topology>
    </subcellularLocation>
    <text>The DGC is not necessary to establish snf-6 at the postsynaptic membrane, but it is required for maintenance or stabilization.</text>
</comment>
<comment type="tissue specificity">
    <text evidence="3">Body wall, and vulval and enteric muscles.</text>
</comment>
<comment type="similarity">
    <text evidence="4">Belongs to the sodium:neurotransmitter symporter (SNF) (TC 2.A.22) family.</text>
</comment>
<reference evidence="4" key="1">
    <citation type="journal article" date="2004" name="Nature">
        <title>SNF-6 is an acetylcholine transporter interacting with the dystrophin complex in Caenorhabditis elegans.</title>
        <authorList>
            <person name="Kim H."/>
            <person name="Rogers M.J."/>
            <person name="Richmond J.E."/>
            <person name="McIntire S.L."/>
        </authorList>
    </citation>
    <scope>NUCLEOTIDE SEQUENCE [MRNA]</scope>
    <scope>FUNCTION</scope>
    <scope>INTERACTION WITH STN-1</scope>
    <scope>SUBCELLULAR LOCATION</scope>
    <scope>TISSUE SPECIFICITY</scope>
    <scope>MUTAGENESIS OF GLY-144 AND 712-THR--ALA-714</scope>
</reference>
<reference key="2">
    <citation type="journal article" date="1998" name="Science">
        <title>Genome sequence of the nematode C. elegans: a platform for investigating biology.</title>
        <authorList>
            <consortium name="The C. elegans sequencing consortium"/>
        </authorList>
    </citation>
    <scope>NUCLEOTIDE SEQUENCE [LARGE SCALE GENOMIC DNA]</scope>
    <source>
        <strain>Bristol N2</strain>
    </source>
</reference>
<gene>
    <name evidence="5" type="primary">snf-6</name>
    <name evidence="5" type="ORF">M01G5.5</name>
</gene>
<proteinExistence type="evidence at protein level"/>
<feature type="chain" id="PRO_0000214816" description="Sodium-dependent acetylcholine transporter">
    <location>
        <begin position="1"/>
        <end position="714"/>
    </location>
</feature>
<feature type="topological domain" description="Cytoplasmic" evidence="1">
    <location>
        <begin position="1"/>
        <end position="74"/>
    </location>
</feature>
<feature type="transmembrane region" description="Helical; Name=1" evidence="1">
    <location>
        <begin position="75"/>
        <end position="95"/>
    </location>
</feature>
<feature type="transmembrane region" description="Helical; Name=2" evidence="1">
    <location>
        <begin position="100"/>
        <end position="120"/>
    </location>
</feature>
<feature type="transmembrane region" description="Helical; Name=3" evidence="1">
    <location>
        <begin position="152"/>
        <end position="172"/>
    </location>
</feature>
<feature type="topological domain" description="Extracellular" evidence="1">
    <location>
        <begin position="173"/>
        <end position="257"/>
    </location>
</feature>
<feature type="transmembrane region" description="Helical; Name=4" evidence="1">
    <location>
        <begin position="258"/>
        <end position="278"/>
    </location>
</feature>
<feature type="transmembrane region" description="Helical; Name=5" evidence="1">
    <location>
        <begin position="287"/>
        <end position="307"/>
    </location>
</feature>
<feature type="transmembrane region" description="Helical; Name=6" evidence="1">
    <location>
        <begin position="336"/>
        <end position="356"/>
    </location>
</feature>
<feature type="transmembrane region" description="Helical; Name=7" evidence="1">
    <location>
        <begin position="368"/>
        <end position="388"/>
    </location>
</feature>
<feature type="transmembrane region" description="Helical; Name=8" evidence="1">
    <location>
        <begin position="422"/>
        <end position="442"/>
    </location>
</feature>
<feature type="transmembrane region" description="Helical; Name=9" evidence="1">
    <location>
        <begin position="476"/>
        <end position="496"/>
    </location>
</feature>
<feature type="transmembrane region" description="Helical; Name=10" evidence="1">
    <location>
        <begin position="502"/>
        <end position="522"/>
    </location>
</feature>
<feature type="transmembrane region" description="Helical; Name=11" evidence="1">
    <location>
        <begin position="548"/>
        <end position="568"/>
    </location>
</feature>
<feature type="transmembrane region" description="Helical; Name=12" evidence="1">
    <location>
        <begin position="584"/>
        <end position="604"/>
    </location>
</feature>
<feature type="topological domain" description="Cytoplasmic" evidence="1">
    <location>
        <begin position="605"/>
        <end position="714"/>
    </location>
</feature>
<feature type="region of interest" description="Disordered" evidence="2">
    <location>
        <begin position="1"/>
        <end position="21"/>
    </location>
</feature>
<feature type="glycosylation site" description="N-linked (GlcNAc...) asparagine" evidence="1">
    <location>
        <position position="192"/>
    </location>
</feature>
<feature type="glycosylation site" description="N-linked (GlcNAc...) asparagine" evidence="1">
    <location>
        <position position="205"/>
    </location>
</feature>
<feature type="glycosylation site" description="N-linked (GlcNAc...) asparagine" evidence="1">
    <location>
        <position position="211"/>
    </location>
</feature>
<feature type="glycosylation site" description="N-linked (GlcNAc...) asparagine" evidence="1">
    <location>
        <position position="222"/>
    </location>
</feature>
<feature type="mutagenesis site" description="In allele eg114; exaggerated bending of the anterior body and head, and mild hypercontraction. Elevated concentrations of acetylcholine at the NMJ." evidence="3">
    <original>G</original>
    <variation>D</variation>
    <location>
        <position position="144"/>
    </location>
</feature>
<feature type="mutagenesis site" description="Loss of interaction with stn-1." evidence="3">
    <location>
        <begin position="712"/>
        <end position="714"/>
    </location>
</feature>
<sequence>MSVSSNDPEQRNGRGMASGNNVDMSLYPPFIKQLDAKLPDYTREGDIEYPFEEITGVGDENRIRGNWSNKSDYLLAVIGFTAGVGSFWKFPFLVFQHGGAAFLVPYLCMLCLASLPMFFMEMVLGQFSSSAAISVWKVVPLFKGIGFAQVTISGFFAVFFNIISAWTLFYLINSFSFSIPWSNCANSWSGENCTLGTRIQCKEMNGTLLVNGSCIVEHASSNETTVIPLHDLGSIPSLKYFHNDVLMLSKGVDDFGTLNWYLGLCVLACWIAVFLCLFQGVKSSGKVVYVAVIVPFIILTVLLTRLLTLDGSLAAVFYFLTPKWEILMDLHVWGEAAVQAFYSVSCCSGGLFTIASYSRFHNNIYKDIWLVLIVDVIVSLVGCLLTFSAIGFTCYEFAISLDKFHIRDGFHLVFVFLAEALAGVSVAPLYAGLFFIMILLVVHATQMFVVETIVSSICDEYPERLRRNRRHVLTTVCALFILLSIPFCLSSGLFWMELLTQFVLTWPLVVIAFLECMAINWVYGVDNMLDNAKWIVGYWPPCYIFWKILFKFICPMVYLAILCFLWLDWNSIQYESYQFPYWSILTAWCIASFPLILIPIVGIWQFCIAKGTITQKWWRVLYPDDAWGPAMAIHRAEKFPLQIPEARRLLLPPEVEIASSRGVLQEEMPMSYDYNTSSAADVRSNRSTGHGATDVRSVAATNNTIPKFERETAI</sequence>
<organism>
    <name type="scientific">Caenorhabditis elegans</name>
    <dbReference type="NCBI Taxonomy" id="6239"/>
    <lineage>
        <taxon>Eukaryota</taxon>
        <taxon>Metazoa</taxon>
        <taxon>Ecdysozoa</taxon>
        <taxon>Nematoda</taxon>
        <taxon>Chromadorea</taxon>
        <taxon>Rhabditida</taxon>
        <taxon>Rhabditina</taxon>
        <taxon>Rhabditomorpha</taxon>
        <taxon>Rhabditoidea</taxon>
        <taxon>Rhabditidae</taxon>
        <taxon>Peloderinae</taxon>
        <taxon>Caenorhabditis</taxon>
    </lineage>
</organism>
<accession>O76689</accession>
<accession>Q49RB2</accession>
<protein>
    <recommendedName>
        <fullName>Sodium-dependent acetylcholine transporter</fullName>
    </recommendedName>
    <alternativeName>
        <fullName>Sodium:neurotransmitter symporter family protein 6</fullName>
    </alternativeName>
</protein>
<keyword id="KW-1003">Cell membrane</keyword>
<keyword id="KW-0325">Glycoprotein</keyword>
<keyword id="KW-0472">Membrane</keyword>
<keyword id="KW-0532">Neurotransmitter transport</keyword>
<keyword id="KW-0628">Postsynaptic cell membrane</keyword>
<keyword id="KW-1185">Reference proteome</keyword>
<keyword id="KW-0769">Symport</keyword>
<keyword id="KW-0770">Synapse</keyword>
<keyword id="KW-0812">Transmembrane</keyword>
<keyword id="KW-1133">Transmembrane helix</keyword>
<keyword id="KW-0813">Transport</keyword>